<proteinExistence type="inferred from homology"/>
<accession>A9G8M9</accession>
<name>PDRP_SORC5</name>
<feature type="chain" id="PRO_1000084476" description="Putative pyruvate, phosphate dikinase regulatory protein">
    <location>
        <begin position="1"/>
        <end position="281"/>
    </location>
</feature>
<feature type="binding site" evidence="1">
    <location>
        <begin position="150"/>
        <end position="157"/>
    </location>
    <ligand>
        <name>ADP</name>
        <dbReference type="ChEBI" id="CHEBI:456216"/>
    </ligand>
</feature>
<evidence type="ECO:0000255" key="1">
    <source>
        <dbReference type="HAMAP-Rule" id="MF_00921"/>
    </source>
</evidence>
<gene>
    <name type="ordered locus">sce5851</name>
</gene>
<keyword id="KW-0418">Kinase</keyword>
<keyword id="KW-0547">Nucleotide-binding</keyword>
<keyword id="KW-1185">Reference proteome</keyword>
<keyword id="KW-0723">Serine/threonine-protein kinase</keyword>
<keyword id="KW-0808">Transferase</keyword>
<dbReference type="EC" id="2.7.11.32" evidence="1"/>
<dbReference type="EC" id="2.7.4.27" evidence="1"/>
<dbReference type="EMBL" id="AM746676">
    <property type="protein sequence ID" value="CAN96014.1"/>
    <property type="molecule type" value="Genomic_DNA"/>
</dbReference>
<dbReference type="RefSeq" id="WP_012238479.1">
    <property type="nucleotide sequence ID" value="NC_010162.1"/>
</dbReference>
<dbReference type="SMR" id="A9G8M9"/>
<dbReference type="STRING" id="448385.sce5851"/>
<dbReference type="KEGG" id="scl:sce5851"/>
<dbReference type="eggNOG" id="COG1806">
    <property type="taxonomic scope" value="Bacteria"/>
</dbReference>
<dbReference type="HOGENOM" id="CLU_046206_2_1_7"/>
<dbReference type="OrthoDB" id="9782201at2"/>
<dbReference type="BioCyc" id="SCEL448385:SCE_RS30060-MONOMER"/>
<dbReference type="Proteomes" id="UP000002139">
    <property type="component" value="Chromosome"/>
</dbReference>
<dbReference type="GO" id="GO:0043531">
    <property type="term" value="F:ADP binding"/>
    <property type="evidence" value="ECO:0007669"/>
    <property type="project" value="UniProtKB-UniRule"/>
</dbReference>
<dbReference type="GO" id="GO:0005524">
    <property type="term" value="F:ATP binding"/>
    <property type="evidence" value="ECO:0007669"/>
    <property type="project" value="InterPro"/>
</dbReference>
<dbReference type="GO" id="GO:0016776">
    <property type="term" value="F:phosphotransferase activity, phosphate group as acceptor"/>
    <property type="evidence" value="ECO:0007669"/>
    <property type="project" value="UniProtKB-UniRule"/>
</dbReference>
<dbReference type="GO" id="GO:0004674">
    <property type="term" value="F:protein serine/threonine kinase activity"/>
    <property type="evidence" value="ECO:0007669"/>
    <property type="project" value="UniProtKB-UniRule"/>
</dbReference>
<dbReference type="HAMAP" id="MF_00921">
    <property type="entry name" value="PDRP"/>
    <property type="match status" value="1"/>
</dbReference>
<dbReference type="InterPro" id="IPR005177">
    <property type="entry name" value="Kinase-pyrophosphorylase"/>
</dbReference>
<dbReference type="InterPro" id="IPR026565">
    <property type="entry name" value="PPDK_reg"/>
</dbReference>
<dbReference type="NCBIfam" id="NF003742">
    <property type="entry name" value="PRK05339.1"/>
    <property type="match status" value="1"/>
</dbReference>
<dbReference type="PANTHER" id="PTHR31756">
    <property type="entry name" value="PYRUVATE, PHOSPHATE DIKINASE REGULATORY PROTEIN 1, CHLOROPLASTIC"/>
    <property type="match status" value="1"/>
</dbReference>
<dbReference type="PANTHER" id="PTHR31756:SF3">
    <property type="entry name" value="PYRUVATE, PHOSPHATE DIKINASE REGULATORY PROTEIN 1, CHLOROPLASTIC"/>
    <property type="match status" value="1"/>
</dbReference>
<dbReference type="Pfam" id="PF03618">
    <property type="entry name" value="Kinase-PPPase"/>
    <property type="match status" value="1"/>
</dbReference>
<sequence>MDKAKFIDVLSDSTGETAEKAVRAALLQYPDAGVQIRLHTRVRTPEVARPVLERAAQEGALVVFTVVSPELREFVHASTAELNIEAIDLIGSLIVRLGTFLDREPINLPSAMLPLSEEYFRRIEAVEFAVKSDDGKEPRNFKRADIVLVGVSRTSKTPLSTLLAQRGLKVANLPLVLGVPPPLELMEAPQDRVVGLTIGIDQLCEIRQARLRQLGMPSETNYAMREHVRQELDFANRLFAAHPEWPVVDVTKRAIEETAVIILEHLKERDERAKVVRSSLV</sequence>
<reference key="1">
    <citation type="journal article" date="2007" name="Nat. Biotechnol.">
        <title>Complete genome sequence of the myxobacterium Sorangium cellulosum.</title>
        <authorList>
            <person name="Schneiker S."/>
            <person name="Perlova O."/>
            <person name="Kaiser O."/>
            <person name="Gerth K."/>
            <person name="Alici A."/>
            <person name="Altmeyer M.O."/>
            <person name="Bartels D."/>
            <person name="Bekel T."/>
            <person name="Beyer S."/>
            <person name="Bode E."/>
            <person name="Bode H.B."/>
            <person name="Bolten C.J."/>
            <person name="Choudhuri J.V."/>
            <person name="Doss S."/>
            <person name="Elnakady Y.A."/>
            <person name="Frank B."/>
            <person name="Gaigalat L."/>
            <person name="Goesmann A."/>
            <person name="Groeger C."/>
            <person name="Gross F."/>
            <person name="Jelsbak L."/>
            <person name="Jelsbak L."/>
            <person name="Kalinowski J."/>
            <person name="Kegler C."/>
            <person name="Knauber T."/>
            <person name="Konietzny S."/>
            <person name="Kopp M."/>
            <person name="Krause L."/>
            <person name="Krug D."/>
            <person name="Linke B."/>
            <person name="Mahmud T."/>
            <person name="Martinez-Arias R."/>
            <person name="McHardy A.C."/>
            <person name="Merai M."/>
            <person name="Meyer F."/>
            <person name="Mormann S."/>
            <person name="Munoz-Dorado J."/>
            <person name="Perez J."/>
            <person name="Pradella S."/>
            <person name="Rachid S."/>
            <person name="Raddatz G."/>
            <person name="Rosenau F."/>
            <person name="Rueckert C."/>
            <person name="Sasse F."/>
            <person name="Scharfe M."/>
            <person name="Schuster S.C."/>
            <person name="Suen G."/>
            <person name="Treuner-Lange A."/>
            <person name="Velicer G.J."/>
            <person name="Vorholter F.-J."/>
            <person name="Weissman K.J."/>
            <person name="Welch R.D."/>
            <person name="Wenzel S.C."/>
            <person name="Whitworth D.E."/>
            <person name="Wilhelm S."/>
            <person name="Wittmann C."/>
            <person name="Bloecker H."/>
            <person name="Puehler A."/>
            <person name="Mueller R."/>
        </authorList>
    </citation>
    <scope>NUCLEOTIDE SEQUENCE [LARGE SCALE GENOMIC DNA]</scope>
    <source>
        <strain>So ce56</strain>
    </source>
</reference>
<organism>
    <name type="scientific">Sorangium cellulosum (strain So ce56)</name>
    <name type="common">Polyangium cellulosum (strain So ce56)</name>
    <dbReference type="NCBI Taxonomy" id="448385"/>
    <lineage>
        <taxon>Bacteria</taxon>
        <taxon>Pseudomonadati</taxon>
        <taxon>Myxococcota</taxon>
        <taxon>Polyangia</taxon>
        <taxon>Polyangiales</taxon>
        <taxon>Polyangiaceae</taxon>
        <taxon>Sorangium</taxon>
    </lineage>
</organism>
<comment type="function">
    <text evidence="1">Bifunctional serine/threonine kinase and phosphorylase involved in the regulation of the pyruvate, phosphate dikinase (PPDK) by catalyzing its phosphorylation/dephosphorylation.</text>
</comment>
<comment type="catalytic activity">
    <reaction evidence="1">
        <text>N(tele)-phospho-L-histidyl/L-threonyl-[pyruvate, phosphate dikinase] + ADP = N(tele)-phospho-L-histidyl/O-phospho-L-threonyl-[pyruvate, phosphate dikinase] + AMP + H(+)</text>
        <dbReference type="Rhea" id="RHEA:43692"/>
        <dbReference type="Rhea" id="RHEA-COMP:10650"/>
        <dbReference type="Rhea" id="RHEA-COMP:10651"/>
        <dbReference type="ChEBI" id="CHEBI:15378"/>
        <dbReference type="ChEBI" id="CHEBI:30013"/>
        <dbReference type="ChEBI" id="CHEBI:61977"/>
        <dbReference type="ChEBI" id="CHEBI:83586"/>
        <dbReference type="ChEBI" id="CHEBI:456215"/>
        <dbReference type="ChEBI" id="CHEBI:456216"/>
        <dbReference type="EC" id="2.7.11.32"/>
    </reaction>
</comment>
<comment type="catalytic activity">
    <reaction evidence="1">
        <text>N(tele)-phospho-L-histidyl/O-phospho-L-threonyl-[pyruvate, phosphate dikinase] + phosphate + H(+) = N(tele)-phospho-L-histidyl/L-threonyl-[pyruvate, phosphate dikinase] + diphosphate</text>
        <dbReference type="Rhea" id="RHEA:43696"/>
        <dbReference type="Rhea" id="RHEA-COMP:10650"/>
        <dbReference type="Rhea" id="RHEA-COMP:10651"/>
        <dbReference type="ChEBI" id="CHEBI:15378"/>
        <dbReference type="ChEBI" id="CHEBI:30013"/>
        <dbReference type="ChEBI" id="CHEBI:33019"/>
        <dbReference type="ChEBI" id="CHEBI:43474"/>
        <dbReference type="ChEBI" id="CHEBI:61977"/>
        <dbReference type="ChEBI" id="CHEBI:83586"/>
        <dbReference type="EC" id="2.7.4.27"/>
    </reaction>
</comment>
<comment type="similarity">
    <text evidence="1">Belongs to the pyruvate, phosphate/water dikinase regulatory protein family. PDRP subfamily.</text>
</comment>
<protein>
    <recommendedName>
        <fullName evidence="1">Putative pyruvate, phosphate dikinase regulatory protein</fullName>
        <shortName evidence="1">PPDK regulatory protein</shortName>
        <ecNumber evidence="1">2.7.11.32</ecNumber>
        <ecNumber evidence="1">2.7.4.27</ecNumber>
    </recommendedName>
</protein>